<proteinExistence type="inferred from homology"/>
<comment type="function">
    <text evidence="1">Catalyzes the attachment of proline to tRNA(Pro) in a two-step reaction: proline is first activated by ATP to form Pro-AMP and then transferred to the acceptor end of tRNA(Pro). As ProRS can inadvertently accommodate and process non-cognate amino acids such as alanine and cysteine, to avoid such errors it has two additional distinct editing activities against alanine. One activity is designated as 'pretransfer' editing and involves the tRNA(Pro)-independent hydrolysis of activated Ala-AMP. The other activity is designated 'posttransfer' editing and involves deacylation of mischarged Ala-tRNA(Pro). The misacylated Cys-tRNA(Pro) is not edited by ProRS.</text>
</comment>
<comment type="catalytic activity">
    <reaction evidence="1">
        <text>tRNA(Pro) + L-proline + ATP = L-prolyl-tRNA(Pro) + AMP + diphosphate</text>
        <dbReference type="Rhea" id="RHEA:14305"/>
        <dbReference type="Rhea" id="RHEA-COMP:9700"/>
        <dbReference type="Rhea" id="RHEA-COMP:9702"/>
        <dbReference type="ChEBI" id="CHEBI:30616"/>
        <dbReference type="ChEBI" id="CHEBI:33019"/>
        <dbReference type="ChEBI" id="CHEBI:60039"/>
        <dbReference type="ChEBI" id="CHEBI:78442"/>
        <dbReference type="ChEBI" id="CHEBI:78532"/>
        <dbReference type="ChEBI" id="CHEBI:456215"/>
        <dbReference type="EC" id="6.1.1.15"/>
    </reaction>
</comment>
<comment type="subunit">
    <text evidence="1">Homodimer.</text>
</comment>
<comment type="subcellular location">
    <subcellularLocation>
        <location evidence="1">Cytoplasm</location>
    </subcellularLocation>
</comment>
<comment type="domain">
    <text evidence="1">Consists of three domains: the N-terminal catalytic domain, the editing domain and the C-terminal anticodon-binding domain.</text>
</comment>
<comment type="similarity">
    <text evidence="1">Belongs to the class-II aminoacyl-tRNA synthetase family. ProS type 1 subfamily.</text>
</comment>
<accession>C1B2Z4</accession>
<organism>
    <name type="scientific">Rhodococcus opacus (strain B4)</name>
    <dbReference type="NCBI Taxonomy" id="632772"/>
    <lineage>
        <taxon>Bacteria</taxon>
        <taxon>Bacillati</taxon>
        <taxon>Actinomycetota</taxon>
        <taxon>Actinomycetes</taxon>
        <taxon>Mycobacteriales</taxon>
        <taxon>Nocardiaceae</taxon>
        <taxon>Rhodococcus</taxon>
    </lineage>
</organism>
<feature type="chain" id="PRO_1000185509" description="Proline--tRNA ligase">
    <location>
        <begin position="1"/>
        <end position="581"/>
    </location>
</feature>
<name>SYP_RHOOB</name>
<dbReference type="EC" id="6.1.1.15" evidence="1"/>
<dbReference type="EMBL" id="AP011115">
    <property type="protein sequence ID" value="BAH54911.1"/>
    <property type="molecule type" value="Genomic_DNA"/>
</dbReference>
<dbReference type="RefSeq" id="WP_015890349.1">
    <property type="nucleotide sequence ID" value="NC_012522.1"/>
</dbReference>
<dbReference type="SMR" id="C1B2Z4"/>
<dbReference type="STRING" id="632772.ROP_66640"/>
<dbReference type="KEGG" id="rop:ROP_66640"/>
<dbReference type="PATRIC" id="fig|632772.20.peg.6950"/>
<dbReference type="HOGENOM" id="CLU_016739_0_0_11"/>
<dbReference type="OrthoDB" id="9809052at2"/>
<dbReference type="Proteomes" id="UP000002212">
    <property type="component" value="Chromosome"/>
</dbReference>
<dbReference type="GO" id="GO:0005829">
    <property type="term" value="C:cytosol"/>
    <property type="evidence" value="ECO:0007669"/>
    <property type="project" value="TreeGrafter"/>
</dbReference>
<dbReference type="GO" id="GO:0002161">
    <property type="term" value="F:aminoacyl-tRNA deacylase activity"/>
    <property type="evidence" value="ECO:0007669"/>
    <property type="project" value="InterPro"/>
</dbReference>
<dbReference type="GO" id="GO:0005524">
    <property type="term" value="F:ATP binding"/>
    <property type="evidence" value="ECO:0007669"/>
    <property type="project" value="UniProtKB-UniRule"/>
</dbReference>
<dbReference type="GO" id="GO:0004827">
    <property type="term" value="F:proline-tRNA ligase activity"/>
    <property type="evidence" value="ECO:0007669"/>
    <property type="project" value="UniProtKB-UniRule"/>
</dbReference>
<dbReference type="GO" id="GO:0006433">
    <property type="term" value="P:prolyl-tRNA aminoacylation"/>
    <property type="evidence" value="ECO:0007669"/>
    <property type="project" value="UniProtKB-UniRule"/>
</dbReference>
<dbReference type="FunFam" id="3.30.930.10:FF:000065">
    <property type="entry name" value="Proline--tRNA ligase"/>
    <property type="match status" value="1"/>
</dbReference>
<dbReference type="FunFam" id="3.30.930.10:FF:000070">
    <property type="entry name" value="Proline--tRNA ligase"/>
    <property type="match status" value="1"/>
</dbReference>
<dbReference type="Gene3D" id="3.40.50.800">
    <property type="entry name" value="Anticodon-binding domain"/>
    <property type="match status" value="1"/>
</dbReference>
<dbReference type="Gene3D" id="3.30.930.10">
    <property type="entry name" value="Bira Bifunctional Protein, Domain 2"/>
    <property type="match status" value="2"/>
</dbReference>
<dbReference type="Gene3D" id="3.90.960.10">
    <property type="entry name" value="YbaK/aminoacyl-tRNA synthetase-associated domain"/>
    <property type="match status" value="1"/>
</dbReference>
<dbReference type="HAMAP" id="MF_01569">
    <property type="entry name" value="Pro_tRNA_synth_type1"/>
    <property type="match status" value="1"/>
</dbReference>
<dbReference type="InterPro" id="IPR002314">
    <property type="entry name" value="aa-tRNA-synt_IIb"/>
</dbReference>
<dbReference type="InterPro" id="IPR006195">
    <property type="entry name" value="aa-tRNA-synth_II"/>
</dbReference>
<dbReference type="InterPro" id="IPR045864">
    <property type="entry name" value="aa-tRNA-synth_II/BPL/LPL"/>
</dbReference>
<dbReference type="InterPro" id="IPR004154">
    <property type="entry name" value="Anticodon-bd"/>
</dbReference>
<dbReference type="InterPro" id="IPR036621">
    <property type="entry name" value="Anticodon-bd_dom_sf"/>
</dbReference>
<dbReference type="InterPro" id="IPR002316">
    <property type="entry name" value="Pro-tRNA-ligase_IIa"/>
</dbReference>
<dbReference type="InterPro" id="IPR004500">
    <property type="entry name" value="Pro-tRNA-synth_IIa_bac-type"/>
</dbReference>
<dbReference type="InterPro" id="IPR023717">
    <property type="entry name" value="Pro-tRNA-Synthase_IIa_type1"/>
</dbReference>
<dbReference type="InterPro" id="IPR050062">
    <property type="entry name" value="Pro-tRNA_synthetase"/>
</dbReference>
<dbReference type="InterPro" id="IPR036754">
    <property type="entry name" value="YbaK/aa-tRNA-synt-asso_dom_sf"/>
</dbReference>
<dbReference type="InterPro" id="IPR007214">
    <property type="entry name" value="YbaK/aa-tRNA-synth-assoc-dom"/>
</dbReference>
<dbReference type="NCBIfam" id="NF006625">
    <property type="entry name" value="PRK09194.1"/>
    <property type="match status" value="1"/>
</dbReference>
<dbReference type="NCBIfam" id="TIGR00409">
    <property type="entry name" value="proS_fam_II"/>
    <property type="match status" value="1"/>
</dbReference>
<dbReference type="PANTHER" id="PTHR42753">
    <property type="entry name" value="MITOCHONDRIAL RIBOSOME PROTEIN L39/PROLYL-TRNA LIGASE FAMILY MEMBER"/>
    <property type="match status" value="1"/>
</dbReference>
<dbReference type="PANTHER" id="PTHR42753:SF2">
    <property type="entry name" value="PROLINE--TRNA LIGASE"/>
    <property type="match status" value="1"/>
</dbReference>
<dbReference type="Pfam" id="PF03129">
    <property type="entry name" value="HGTP_anticodon"/>
    <property type="match status" value="1"/>
</dbReference>
<dbReference type="Pfam" id="PF00587">
    <property type="entry name" value="tRNA-synt_2b"/>
    <property type="match status" value="1"/>
</dbReference>
<dbReference type="Pfam" id="PF04073">
    <property type="entry name" value="tRNA_edit"/>
    <property type="match status" value="1"/>
</dbReference>
<dbReference type="PRINTS" id="PR01046">
    <property type="entry name" value="TRNASYNTHPRO"/>
</dbReference>
<dbReference type="SUPFAM" id="SSF52954">
    <property type="entry name" value="Class II aaRS ABD-related"/>
    <property type="match status" value="1"/>
</dbReference>
<dbReference type="SUPFAM" id="SSF55681">
    <property type="entry name" value="Class II aaRS and biotin synthetases"/>
    <property type="match status" value="1"/>
</dbReference>
<dbReference type="SUPFAM" id="SSF55826">
    <property type="entry name" value="YbaK/ProRS associated domain"/>
    <property type="match status" value="1"/>
</dbReference>
<dbReference type="PROSITE" id="PS50862">
    <property type="entry name" value="AA_TRNA_LIGASE_II"/>
    <property type="match status" value="1"/>
</dbReference>
<evidence type="ECO:0000255" key="1">
    <source>
        <dbReference type="HAMAP-Rule" id="MF_01569"/>
    </source>
</evidence>
<gene>
    <name evidence="1" type="primary">proS</name>
    <name type="ordered locus">ROP_66640</name>
</gene>
<protein>
    <recommendedName>
        <fullName evidence="1">Proline--tRNA ligase</fullName>
        <ecNumber evidence="1">6.1.1.15</ecNumber>
    </recommendedName>
    <alternativeName>
        <fullName evidence="1">Prolyl-tRNA synthetase</fullName>
        <shortName evidence="1">ProRS</shortName>
    </alternativeName>
</protein>
<keyword id="KW-0030">Aminoacyl-tRNA synthetase</keyword>
<keyword id="KW-0067">ATP-binding</keyword>
<keyword id="KW-0963">Cytoplasm</keyword>
<keyword id="KW-0436">Ligase</keyword>
<keyword id="KW-0547">Nucleotide-binding</keyword>
<keyword id="KW-0648">Protein biosynthesis</keyword>
<reference key="1">
    <citation type="submission" date="2009-03" db="EMBL/GenBank/DDBJ databases">
        <title>Comparison of the complete genome sequences of Rhodococcus erythropolis PR4 and Rhodococcus opacus B4.</title>
        <authorList>
            <person name="Takarada H."/>
            <person name="Sekine M."/>
            <person name="Hosoyama A."/>
            <person name="Yamada R."/>
            <person name="Fujisawa T."/>
            <person name="Omata S."/>
            <person name="Shimizu A."/>
            <person name="Tsukatani N."/>
            <person name="Tanikawa S."/>
            <person name="Fujita N."/>
            <person name="Harayama S."/>
        </authorList>
    </citation>
    <scope>NUCLEOTIDE SEQUENCE [LARGE SCALE GENOMIC DNA]</scope>
    <source>
        <strain>B4</strain>
    </source>
</reference>
<sequence>MITRLSHLFLRTLRDDPADAEVPSHKLLVRAGYVRRIAPGVYSWLPLGLRVLREVERVVREEMNGIGAQEISLPALLPREPYEASNRWTEYGEGLFRLKDRKGGDYLLGPTHEELFALTVKGEYNSYKDFPVTLYQVQTKYRDEERPRAGILRGREFVMKDSYSFDLTDEGLTESYRAHRDAYERIFARLGVKYVIVSATSGAMGGSASEEFLAESEIGEDTYVRCLESGYAANVEAVKTLAPEPIPFDGLPAAKVYDTPDTPTIATLVAWANEADLGRTVTAADTLKNLLVKVRQPGGKWELLAIGVPGDREVDDKRLGASLEPAEFELLTEADFEANPFLVKGYVGPKALQANGVRYLVDPRIVDGTSWITGADEKGRHVVGLVAGRDFVPDGTIEAAEVRGGDPSPDGAGELVAARGIEIGHVFQLGRKYTDVFSVDVLGENGKPVRPTMGSYGVGVSRLVAVIAEQHHDDKGLRWPAEVSPADVHVVIANKDDTAREGAEGLAADLDKAGLEVILDDRKASPGVKFKDSELLGVPLVVVVGRGWGEGKVEVRDRFTGESREVAAESALSEIVKTVRG</sequence>